<organism>
    <name type="scientific">Mycobacterium avium (strain 104)</name>
    <dbReference type="NCBI Taxonomy" id="243243"/>
    <lineage>
        <taxon>Bacteria</taxon>
        <taxon>Bacillati</taxon>
        <taxon>Actinomycetota</taxon>
        <taxon>Actinomycetes</taxon>
        <taxon>Mycobacteriales</taxon>
        <taxon>Mycobacteriaceae</taxon>
        <taxon>Mycobacterium</taxon>
        <taxon>Mycobacterium avium complex (MAC)</taxon>
    </lineage>
</organism>
<reference key="1">
    <citation type="submission" date="2006-10" db="EMBL/GenBank/DDBJ databases">
        <authorList>
            <person name="Fleischmann R.D."/>
            <person name="Dodson R.J."/>
            <person name="Haft D.H."/>
            <person name="Merkel J.S."/>
            <person name="Nelson W.C."/>
            <person name="Fraser C.M."/>
        </authorList>
    </citation>
    <scope>NUCLEOTIDE SEQUENCE [LARGE SCALE GENOMIC DNA]</scope>
    <source>
        <strain>104</strain>
    </source>
</reference>
<dbReference type="EMBL" id="CP000479">
    <property type="protein sequence ID" value="ABK64918.1"/>
    <property type="molecule type" value="Genomic_DNA"/>
</dbReference>
<dbReference type="RefSeq" id="WP_011724341.1">
    <property type="nucleotide sequence ID" value="NC_008595.1"/>
</dbReference>
<dbReference type="SMR" id="A0QDN6"/>
<dbReference type="KEGG" id="mav:MAV_1800"/>
<dbReference type="HOGENOM" id="CLU_117727_0_0_11"/>
<dbReference type="Proteomes" id="UP000001574">
    <property type="component" value="Chromosome"/>
</dbReference>
<dbReference type="CDD" id="cd21132">
    <property type="entry name" value="EVE-like"/>
    <property type="match status" value="1"/>
</dbReference>
<dbReference type="Gene3D" id="3.10.590.10">
    <property type="entry name" value="ph1033 like domains"/>
    <property type="match status" value="1"/>
</dbReference>
<dbReference type="HAMAP" id="MF_00771">
    <property type="entry name" value="UPF0310"/>
    <property type="match status" value="1"/>
</dbReference>
<dbReference type="InterPro" id="IPR002740">
    <property type="entry name" value="EVE_domain"/>
</dbReference>
<dbReference type="InterPro" id="IPR015947">
    <property type="entry name" value="PUA-like_sf"/>
</dbReference>
<dbReference type="InterPro" id="IPR022996">
    <property type="entry name" value="UPF0310"/>
</dbReference>
<dbReference type="NCBIfam" id="NF002615">
    <property type="entry name" value="PRK02268.1-1"/>
    <property type="match status" value="1"/>
</dbReference>
<dbReference type="NCBIfam" id="NF002616">
    <property type="entry name" value="PRK02268.1-2"/>
    <property type="match status" value="1"/>
</dbReference>
<dbReference type="Pfam" id="PF01878">
    <property type="entry name" value="EVE"/>
    <property type="match status" value="1"/>
</dbReference>
<dbReference type="SUPFAM" id="SSF88697">
    <property type="entry name" value="PUA domain-like"/>
    <property type="match status" value="1"/>
</dbReference>
<name>Y1800_MYCA1</name>
<sequence>MTNWINTVSRDHVEAGVRGRFTQANHGKPHMLRKMARGDWIVFYSPKTVYPDGEPLQAFTAIGQVADDEPYRAEMTPDFQPWRRKVDFLDCTQTPIRPLIDQLDFIEDKARWGYKFRFGVFKIDDHDLEVIRSAMTDS</sequence>
<protein>
    <recommendedName>
        <fullName evidence="1">UPF0310 protein MAV_1800</fullName>
    </recommendedName>
</protein>
<gene>
    <name type="ordered locus">MAV_1800</name>
</gene>
<accession>A0QDN6</accession>
<evidence type="ECO:0000255" key="1">
    <source>
        <dbReference type="HAMAP-Rule" id="MF_00771"/>
    </source>
</evidence>
<comment type="similarity">
    <text evidence="1">Belongs to the UPF0310 family.</text>
</comment>
<proteinExistence type="inferred from homology"/>
<feature type="chain" id="PRO_1000083575" description="UPF0310 protein MAV_1800">
    <location>
        <begin position="1"/>
        <end position="138"/>
    </location>
</feature>